<accession>A7MR65</accession>
<dbReference type="EC" id="6.1.1.6" evidence="1"/>
<dbReference type="EMBL" id="CP000783">
    <property type="protein sequence ID" value="ABU75739.1"/>
    <property type="molecule type" value="Genomic_DNA"/>
</dbReference>
<dbReference type="RefSeq" id="WP_007870695.1">
    <property type="nucleotide sequence ID" value="NC_009778.1"/>
</dbReference>
<dbReference type="SMR" id="A7MR65"/>
<dbReference type="GeneID" id="56733397"/>
<dbReference type="KEGG" id="esa:ESA_00442"/>
<dbReference type="HOGENOM" id="CLU_008255_6_2_6"/>
<dbReference type="Proteomes" id="UP000000260">
    <property type="component" value="Chromosome"/>
</dbReference>
<dbReference type="GO" id="GO:0005829">
    <property type="term" value="C:cytosol"/>
    <property type="evidence" value="ECO:0007669"/>
    <property type="project" value="TreeGrafter"/>
</dbReference>
<dbReference type="GO" id="GO:0005524">
    <property type="term" value="F:ATP binding"/>
    <property type="evidence" value="ECO:0007669"/>
    <property type="project" value="UniProtKB-UniRule"/>
</dbReference>
<dbReference type="GO" id="GO:0004824">
    <property type="term" value="F:lysine-tRNA ligase activity"/>
    <property type="evidence" value="ECO:0007669"/>
    <property type="project" value="UniProtKB-UniRule"/>
</dbReference>
<dbReference type="GO" id="GO:0000287">
    <property type="term" value="F:magnesium ion binding"/>
    <property type="evidence" value="ECO:0007669"/>
    <property type="project" value="UniProtKB-UniRule"/>
</dbReference>
<dbReference type="GO" id="GO:0000049">
    <property type="term" value="F:tRNA binding"/>
    <property type="evidence" value="ECO:0007669"/>
    <property type="project" value="TreeGrafter"/>
</dbReference>
<dbReference type="GO" id="GO:0006430">
    <property type="term" value="P:lysyl-tRNA aminoacylation"/>
    <property type="evidence" value="ECO:0007669"/>
    <property type="project" value="UniProtKB-UniRule"/>
</dbReference>
<dbReference type="CDD" id="cd00775">
    <property type="entry name" value="LysRS_core"/>
    <property type="match status" value="1"/>
</dbReference>
<dbReference type="CDD" id="cd04322">
    <property type="entry name" value="LysRS_N"/>
    <property type="match status" value="1"/>
</dbReference>
<dbReference type="FunFam" id="2.40.50.140:FF:000024">
    <property type="entry name" value="Lysine--tRNA ligase"/>
    <property type="match status" value="1"/>
</dbReference>
<dbReference type="FunFam" id="3.30.930.10:FF:000001">
    <property type="entry name" value="Lysine--tRNA ligase"/>
    <property type="match status" value="1"/>
</dbReference>
<dbReference type="Gene3D" id="3.30.930.10">
    <property type="entry name" value="Bira Bifunctional Protein, Domain 2"/>
    <property type="match status" value="1"/>
</dbReference>
<dbReference type="Gene3D" id="2.40.50.140">
    <property type="entry name" value="Nucleic acid-binding proteins"/>
    <property type="match status" value="1"/>
</dbReference>
<dbReference type="HAMAP" id="MF_00252">
    <property type="entry name" value="Lys_tRNA_synth_class2"/>
    <property type="match status" value="1"/>
</dbReference>
<dbReference type="InterPro" id="IPR004364">
    <property type="entry name" value="Aa-tRNA-synt_II"/>
</dbReference>
<dbReference type="InterPro" id="IPR006195">
    <property type="entry name" value="aa-tRNA-synth_II"/>
</dbReference>
<dbReference type="InterPro" id="IPR045864">
    <property type="entry name" value="aa-tRNA-synth_II/BPL/LPL"/>
</dbReference>
<dbReference type="InterPro" id="IPR002313">
    <property type="entry name" value="Lys-tRNA-ligase_II"/>
</dbReference>
<dbReference type="InterPro" id="IPR034762">
    <property type="entry name" value="Lys-tRNA-ligase_II_bac/euk"/>
</dbReference>
<dbReference type="InterPro" id="IPR044136">
    <property type="entry name" value="Lys-tRNA-ligase_II_N"/>
</dbReference>
<dbReference type="InterPro" id="IPR018149">
    <property type="entry name" value="Lys-tRNA-synth_II_C"/>
</dbReference>
<dbReference type="InterPro" id="IPR012340">
    <property type="entry name" value="NA-bd_OB-fold"/>
</dbReference>
<dbReference type="InterPro" id="IPR004365">
    <property type="entry name" value="NA-bd_OB_tRNA"/>
</dbReference>
<dbReference type="NCBIfam" id="TIGR00499">
    <property type="entry name" value="lysS_bact"/>
    <property type="match status" value="1"/>
</dbReference>
<dbReference type="NCBIfam" id="NF001756">
    <property type="entry name" value="PRK00484.1"/>
    <property type="match status" value="1"/>
</dbReference>
<dbReference type="NCBIfam" id="NF009101">
    <property type="entry name" value="PRK12445.1"/>
    <property type="match status" value="1"/>
</dbReference>
<dbReference type="PANTHER" id="PTHR42918:SF15">
    <property type="entry name" value="LYSINE--TRNA LIGASE, CHLOROPLASTIC_MITOCHONDRIAL"/>
    <property type="match status" value="1"/>
</dbReference>
<dbReference type="PANTHER" id="PTHR42918">
    <property type="entry name" value="LYSYL-TRNA SYNTHETASE"/>
    <property type="match status" value="1"/>
</dbReference>
<dbReference type="Pfam" id="PF00152">
    <property type="entry name" value="tRNA-synt_2"/>
    <property type="match status" value="1"/>
</dbReference>
<dbReference type="Pfam" id="PF01336">
    <property type="entry name" value="tRNA_anti-codon"/>
    <property type="match status" value="1"/>
</dbReference>
<dbReference type="PIRSF" id="PIRSF039101">
    <property type="entry name" value="LysRS2"/>
    <property type="match status" value="1"/>
</dbReference>
<dbReference type="PRINTS" id="PR00982">
    <property type="entry name" value="TRNASYNTHLYS"/>
</dbReference>
<dbReference type="SUPFAM" id="SSF55681">
    <property type="entry name" value="Class II aaRS and biotin synthetases"/>
    <property type="match status" value="1"/>
</dbReference>
<dbReference type="SUPFAM" id="SSF50249">
    <property type="entry name" value="Nucleic acid-binding proteins"/>
    <property type="match status" value="1"/>
</dbReference>
<dbReference type="PROSITE" id="PS50862">
    <property type="entry name" value="AA_TRNA_LIGASE_II"/>
    <property type="match status" value="1"/>
</dbReference>
<feature type="chain" id="PRO_1000012874" description="Lysine--tRNA ligase">
    <location>
        <begin position="1"/>
        <end position="505"/>
    </location>
</feature>
<feature type="binding site" evidence="1">
    <location>
        <position position="415"/>
    </location>
    <ligand>
        <name>Mg(2+)</name>
        <dbReference type="ChEBI" id="CHEBI:18420"/>
        <label>1</label>
    </ligand>
</feature>
<feature type="binding site" evidence="1">
    <location>
        <position position="422"/>
    </location>
    <ligand>
        <name>Mg(2+)</name>
        <dbReference type="ChEBI" id="CHEBI:18420"/>
        <label>1</label>
    </ligand>
</feature>
<feature type="binding site" evidence="1">
    <location>
        <position position="422"/>
    </location>
    <ligand>
        <name>Mg(2+)</name>
        <dbReference type="ChEBI" id="CHEBI:18420"/>
        <label>2</label>
    </ligand>
</feature>
<protein>
    <recommendedName>
        <fullName evidence="1">Lysine--tRNA ligase</fullName>
        <ecNumber evidence="1">6.1.1.6</ecNumber>
    </recommendedName>
    <alternativeName>
        <fullName evidence="1">Lysyl-tRNA synthetase</fullName>
        <shortName evidence="1">LysRS</shortName>
    </alternativeName>
</protein>
<comment type="catalytic activity">
    <reaction evidence="1">
        <text>tRNA(Lys) + L-lysine + ATP = L-lysyl-tRNA(Lys) + AMP + diphosphate</text>
        <dbReference type="Rhea" id="RHEA:20792"/>
        <dbReference type="Rhea" id="RHEA-COMP:9696"/>
        <dbReference type="Rhea" id="RHEA-COMP:9697"/>
        <dbReference type="ChEBI" id="CHEBI:30616"/>
        <dbReference type="ChEBI" id="CHEBI:32551"/>
        <dbReference type="ChEBI" id="CHEBI:33019"/>
        <dbReference type="ChEBI" id="CHEBI:78442"/>
        <dbReference type="ChEBI" id="CHEBI:78529"/>
        <dbReference type="ChEBI" id="CHEBI:456215"/>
        <dbReference type="EC" id="6.1.1.6"/>
    </reaction>
</comment>
<comment type="cofactor">
    <cofactor evidence="1">
        <name>Mg(2+)</name>
        <dbReference type="ChEBI" id="CHEBI:18420"/>
    </cofactor>
    <text evidence="1">Binds 3 Mg(2+) ions per subunit.</text>
</comment>
<comment type="subunit">
    <text evidence="1">Homodimer.</text>
</comment>
<comment type="subcellular location">
    <subcellularLocation>
        <location evidence="1">Cytoplasm</location>
    </subcellularLocation>
</comment>
<comment type="similarity">
    <text evidence="1">Belongs to the class-II aminoacyl-tRNA synthetase family.</text>
</comment>
<evidence type="ECO:0000255" key="1">
    <source>
        <dbReference type="HAMAP-Rule" id="MF_00252"/>
    </source>
</evidence>
<reference key="1">
    <citation type="journal article" date="2010" name="PLoS ONE">
        <title>Genome sequence of Cronobacter sakazakii BAA-894 and comparative genomic hybridization analysis with other Cronobacter species.</title>
        <authorList>
            <person name="Kucerova E."/>
            <person name="Clifton S.W."/>
            <person name="Xia X.Q."/>
            <person name="Long F."/>
            <person name="Porwollik S."/>
            <person name="Fulton L."/>
            <person name="Fronick C."/>
            <person name="Minx P."/>
            <person name="Kyung K."/>
            <person name="Warren W."/>
            <person name="Fulton R."/>
            <person name="Feng D."/>
            <person name="Wollam A."/>
            <person name="Shah N."/>
            <person name="Bhonagiri V."/>
            <person name="Nash W.E."/>
            <person name="Hallsworth-Pepin K."/>
            <person name="Wilson R.K."/>
            <person name="McClelland M."/>
            <person name="Forsythe S.J."/>
        </authorList>
    </citation>
    <scope>NUCLEOTIDE SEQUENCE [LARGE SCALE GENOMIC DNA]</scope>
    <source>
        <strain>ATCC BAA-894</strain>
    </source>
</reference>
<keyword id="KW-0030">Aminoacyl-tRNA synthetase</keyword>
<keyword id="KW-0067">ATP-binding</keyword>
<keyword id="KW-0963">Cytoplasm</keyword>
<keyword id="KW-0436">Ligase</keyword>
<keyword id="KW-0460">Magnesium</keyword>
<keyword id="KW-0479">Metal-binding</keyword>
<keyword id="KW-0547">Nucleotide-binding</keyword>
<keyword id="KW-0648">Protein biosynthesis</keyword>
<keyword id="KW-1185">Reference proteome</keyword>
<sequence length="505" mass="57552">MSEQQAQGAEAAVDLNNELKTRREKLAALREHGVAFPNDFRRDHTSDQLHADFDGKENEELEALNIEVCVAGRMMTRRIMGKASFVTLQDVGGRIQLYVARDDLPEGVYNEQFKKWDLGDILGARGKLFKTKTGELSIHCTELRLLTKALRPLPDKFHGLQDQEARYRQRYLDLIANDESRKTFKVRSQILAGIRQFMVGRGFMEVETPMMQVIPGGASARPFVTHHNALDLDMYLRIAPELYLKRLVVGGFERVFEINRNFRNEGISVRHNPEFTMMELYMAYADYKDLIELTESLFRTLAQDVLGTTQVPYGEETFDFGKPFEKLTMREAIKKYRPETDLADLDDFEKAKGIAQAVGIKVEKSWGLGRVVTEIFEEVAEAHLIQPTFITEYPAEVSPLARRNDENPEITDRFEFFIGGREIGNGFSELNDAEDQAQRFQDQVAAKDAGDDEAMFYDEDYVTALEHGLPPTAGLGIGIDRMVMLFTNSHTIRDVILFPAMRPVK</sequence>
<organism>
    <name type="scientific">Cronobacter sakazakii (strain ATCC BAA-894)</name>
    <name type="common">Enterobacter sakazakii</name>
    <dbReference type="NCBI Taxonomy" id="290339"/>
    <lineage>
        <taxon>Bacteria</taxon>
        <taxon>Pseudomonadati</taxon>
        <taxon>Pseudomonadota</taxon>
        <taxon>Gammaproteobacteria</taxon>
        <taxon>Enterobacterales</taxon>
        <taxon>Enterobacteriaceae</taxon>
        <taxon>Cronobacter</taxon>
    </lineage>
</organism>
<proteinExistence type="inferred from homology"/>
<name>SYK_CROS8</name>
<gene>
    <name evidence="1" type="primary">lysS</name>
    <name type="ordered locus">ESA_00442</name>
</gene>